<evidence type="ECO:0000255" key="1">
    <source>
        <dbReference type="HAMAP-Rule" id="MF_01151"/>
    </source>
</evidence>
<evidence type="ECO:0000256" key="2">
    <source>
        <dbReference type="SAM" id="MobiDB-lite"/>
    </source>
</evidence>
<accession>B1JG65</accession>
<comment type="function">
    <text evidence="1">Participates actively in the response to hyperosmotic and heat shock by preventing the aggregation of stress-denatured proteins, in association with DnaK and GrpE. It is the nucleotide exchange factor for DnaK and may function as a thermosensor. Unfolded proteins bind initially to DnaJ; upon interaction with the DnaJ-bound protein, DnaK hydrolyzes its bound ATP, resulting in the formation of a stable complex. GrpE releases ADP from DnaK; ATP binding to DnaK triggers the release of the substrate protein, thus completing the reaction cycle. Several rounds of ATP-dependent interactions between DnaJ, DnaK and GrpE are required for fully efficient folding.</text>
</comment>
<comment type="subunit">
    <text evidence="1">Homodimer.</text>
</comment>
<comment type="subcellular location">
    <subcellularLocation>
        <location evidence="1">Cytoplasm</location>
    </subcellularLocation>
</comment>
<comment type="similarity">
    <text evidence="1">Belongs to the GrpE family.</text>
</comment>
<sequence>MSSKEQKTPNEQVSEEMENTAEQQVEATQETGECVDPRVAELEVQLSDALQRERESLLRAKAEVENIRRRTELDVEKAHKFALERFSSELLPVIDNLERALDTADKTNTELTSMIEGVELTLKSLLDAVGKFGIEVVGETHVPFNPEVHQAMTMLESADHEPNHVMMVMQKGYTLNGRLLRPAMVAVSKAKS</sequence>
<organism>
    <name type="scientific">Yersinia pseudotuberculosis serotype O:3 (strain YPIII)</name>
    <dbReference type="NCBI Taxonomy" id="502800"/>
    <lineage>
        <taxon>Bacteria</taxon>
        <taxon>Pseudomonadati</taxon>
        <taxon>Pseudomonadota</taxon>
        <taxon>Gammaproteobacteria</taxon>
        <taxon>Enterobacterales</taxon>
        <taxon>Yersiniaceae</taxon>
        <taxon>Yersinia</taxon>
    </lineage>
</organism>
<keyword id="KW-0143">Chaperone</keyword>
<keyword id="KW-0963">Cytoplasm</keyword>
<keyword id="KW-0346">Stress response</keyword>
<reference key="1">
    <citation type="submission" date="2008-02" db="EMBL/GenBank/DDBJ databases">
        <title>Complete sequence of Yersinia pseudotuberculosis YPIII.</title>
        <authorList>
            <consortium name="US DOE Joint Genome Institute"/>
            <person name="Copeland A."/>
            <person name="Lucas S."/>
            <person name="Lapidus A."/>
            <person name="Glavina del Rio T."/>
            <person name="Dalin E."/>
            <person name="Tice H."/>
            <person name="Bruce D."/>
            <person name="Goodwin L."/>
            <person name="Pitluck S."/>
            <person name="Munk A.C."/>
            <person name="Brettin T."/>
            <person name="Detter J.C."/>
            <person name="Han C."/>
            <person name="Tapia R."/>
            <person name="Schmutz J."/>
            <person name="Larimer F."/>
            <person name="Land M."/>
            <person name="Hauser L."/>
            <person name="Challacombe J.F."/>
            <person name="Green L."/>
            <person name="Lindler L.E."/>
            <person name="Nikolich M.P."/>
            <person name="Richardson P."/>
        </authorList>
    </citation>
    <scope>NUCLEOTIDE SEQUENCE [LARGE SCALE GENOMIC DNA]</scope>
    <source>
        <strain>YPIII</strain>
    </source>
</reference>
<proteinExistence type="inferred from homology"/>
<protein>
    <recommendedName>
        <fullName evidence="1">Protein GrpE</fullName>
    </recommendedName>
    <alternativeName>
        <fullName evidence="1">HSP-70 cofactor</fullName>
    </alternativeName>
</protein>
<name>GRPE_YERPY</name>
<gene>
    <name evidence="1" type="primary">grpE</name>
    <name type="ordered locus">YPK_2974</name>
</gene>
<dbReference type="EMBL" id="CP000950">
    <property type="protein sequence ID" value="ACA69248.1"/>
    <property type="molecule type" value="Genomic_DNA"/>
</dbReference>
<dbReference type="RefSeq" id="WP_002224622.1">
    <property type="nucleotide sequence ID" value="NZ_CP009792.1"/>
</dbReference>
<dbReference type="SMR" id="B1JG65"/>
<dbReference type="GeneID" id="49786790"/>
<dbReference type="KEGG" id="ypy:YPK_2974"/>
<dbReference type="PATRIC" id="fig|502800.11.peg.3695"/>
<dbReference type="GO" id="GO:0005829">
    <property type="term" value="C:cytosol"/>
    <property type="evidence" value="ECO:0007669"/>
    <property type="project" value="TreeGrafter"/>
</dbReference>
<dbReference type="GO" id="GO:0000774">
    <property type="term" value="F:adenyl-nucleotide exchange factor activity"/>
    <property type="evidence" value="ECO:0007669"/>
    <property type="project" value="InterPro"/>
</dbReference>
<dbReference type="GO" id="GO:0042803">
    <property type="term" value="F:protein homodimerization activity"/>
    <property type="evidence" value="ECO:0007669"/>
    <property type="project" value="InterPro"/>
</dbReference>
<dbReference type="GO" id="GO:0051087">
    <property type="term" value="F:protein-folding chaperone binding"/>
    <property type="evidence" value="ECO:0007669"/>
    <property type="project" value="InterPro"/>
</dbReference>
<dbReference type="GO" id="GO:0051082">
    <property type="term" value="F:unfolded protein binding"/>
    <property type="evidence" value="ECO:0007669"/>
    <property type="project" value="TreeGrafter"/>
</dbReference>
<dbReference type="GO" id="GO:0006457">
    <property type="term" value="P:protein folding"/>
    <property type="evidence" value="ECO:0007669"/>
    <property type="project" value="InterPro"/>
</dbReference>
<dbReference type="CDD" id="cd00446">
    <property type="entry name" value="GrpE"/>
    <property type="match status" value="1"/>
</dbReference>
<dbReference type="FunFam" id="2.30.22.10:FF:000001">
    <property type="entry name" value="Protein GrpE"/>
    <property type="match status" value="1"/>
</dbReference>
<dbReference type="FunFam" id="3.90.20.20:FF:000001">
    <property type="entry name" value="Protein GrpE"/>
    <property type="match status" value="1"/>
</dbReference>
<dbReference type="Gene3D" id="3.90.20.20">
    <property type="match status" value="1"/>
</dbReference>
<dbReference type="Gene3D" id="2.30.22.10">
    <property type="entry name" value="Head domain of nucleotide exchange factor GrpE"/>
    <property type="match status" value="1"/>
</dbReference>
<dbReference type="HAMAP" id="MF_01151">
    <property type="entry name" value="GrpE"/>
    <property type="match status" value="1"/>
</dbReference>
<dbReference type="InterPro" id="IPR000740">
    <property type="entry name" value="GrpE"/>
</dbReference>
<dbReference type="InterPro" id="IPR013805">
    <property type="entry name" value="GrpE_coiled_coil"/>
</dbReference>
<dbReference type="InterPro" id="IPR009012">
    <property type="entry name" value="GrpE_head"/>
</dbReference>
<dbReference type="NCBIfam" id="NF010737">
    <property type="entry name" value="PRK14139.1"/>
    <property type="match status" value="1"/>
</dbReference>
<dbReference type="NCBIfam" id="NF010738">
    <property type="entry name" value="PRK14140.1"/>
    <property type="match status" value="1"/>
</dbReference>
<dbReference type="NCBIfam" id="NF010748">
    <property type="entry name" value="PRK14150.1"/>
    <property type="match status" value="1"/>
</dbReference>
<dbReference type="PANTHER" id="PTHR21237">
    <property type="entry name" value="GRPE PROTEIN"/>
    <property type="match status" value="1"/>
</dbReference>
<dbReference type="PANTHER" id="PTHR21237:SF23">
    <property type="entry name" value="GRPE PROTEIN HOMOLOG, MITOCHONDRIAL"/>
    <property type="match status" value="1"/>
</dbReference>
<dbReference type="Pfam" id="PF01025">
    <property type="entry name" value="GrpE"/>
    <property type="match status" value="1"/>
</dbReference>
<dbReference type="PRINTS" id="PR00773">
    <property type="entry name" value="GRPEPROTEIN"/>
</dbReference>
<dbReference type="SUPFAM" id="SSF58014">
    <property type="entry name" value="Coiled-coil domain of nucleotide exchange factor GrpE"/>
    <property type="match status" value="1"/>
</dbReference>
<dbReference type="SUPFAM" id="SSF51064">
    <property type="entry name" value="Head domain of nucleotide exchange factor GrpE"/>
    <property type="match status" value="1"/>
</dbReference>
<dbReference type="PROSITE" id="PS01071">
    <property type="entry name" value="GRPE"/>
    <property type="match status" value="1"/>
</dbReference>
<feature type="chain" id="PRO_1000137646" description="Protein GrpE">
    <location>
        <begin position="1"/>
        <end position="192"/>
    </location>
</feature>
<feature type="region of interest" description="Disordered" evidence="2">
    <location>
        <begin position="1"/>
        <end position="34"/>
    </location>
</feature>
<feature type="compositionally biased region" description="Polar residues" evidence="2">
    <location>
        <begin position="20"/>
        <end position="31"/>
    </location>
</feature>